<keyword id="KW-0131">Cell cycle</keyword>
<keyword id="KW-0132">Cell division</keyword>
<keyword id="KW-0963">Cytoplasm</keyword>
<keyword id="KW-0717">Septation</keyword>
<proteinExistence type="inferred from homology"/>
<accession>Q3K2N8</accession>
<dbReference type="EMBL" id="CP000114">
    <property type="protein sequence ID" value="ABA45139.1"/>
    <property type="molecule type" value="Genomic_DNA"/>
</dbReference>
<dbReference type="RefSeq" id="WP_001185359.1">
    <property type="nucleotide sequence ID" value="NC_007432.1"/>
</dbReference>
<dbReference type="SMR" id="Q3K2N8"/>
<dbReference type="KEGG" id="sak:SAK_0583"/>
<dbReference type="HOGENOM" id="CLU_078499_2_0_9"/>
<dbReference type="GO" id="GO:0005737">
    <property type="term" value="C:cytoplasm"/>
    <property type="evidence" value="ECO:0007669"/>
    <property type="project" value="UniProtKB-SubCell"/>
</dbReference>
<dbReference type="GO" id="GO:0000917">
    <property type="term" value="P:division septum assembly"/>
    <property type="evidence" value="ECO:0007669"/>
    <property type="project" value="UniProtKB-KW"/>
</dbReference>
<dbReference type="GO" id="GO:0043093">
    <property type="term" value="P:FtsZ-dependent cytokinesis"/>
    <property type="evidence" value="ECO:0007669"/>
    <property type="project" value="UniProtKB-UniRule"/>
</dbReference>
<dbReference type="Gene3D" id="3.30.110.150">
    <property type="entry name" value="SepF-like protein"/>
    <property type="match status" value="1"/>
</dbReference>
<dbReference type="HAMAP" id="MF_01197">
    <property type="entry name" value="SepF"/>
    <property type="match status" value="1"/>
</dbReference>
<dbReference type="InterPro" id="IPR023052">
    <property type="entry name" value="Cell_div_SepF"/>
</dbReference>
<dbReference type="InterPro" id="IPR007561">
    <property type="entry name" value="Cell_div_SepF/SepF-rel"/>
</dbReference>
<dbReference type="InterPro" id="IPR038594">
    <property type="entry name" value="SepF-like_sf"/>
</dbReference>
<dbReference type="PANTHER" id="PTHR35798">
    <property type="entry name" value="CELL DIVISION PROTEIN SEPF"/>
    <property type="match status" value="1"/>
</dbReference>
<dbReference type="PANTHER" id="PTHR35798:SF1">
    <property type="entry name" value="CELL DIVISION PROTEIN SEPF"/>
    <property type="match status" value="1"/>
</dbReference>
<dbReference type="Pfam" id="PF04472">
    <property type="entry name" value="SepF"/>
    <property type="match status" value="1"/>
</dbReference>
<reference key="1">
    <citation type="journal article" date="2005" name="Proc. Natl. Acad. Sci. U.S.A.">
        <title>Genome analysis of multiple pathogenic isolates of Streptococcus agalactiae: implications for the microbial 'pan-genome'.</title>
        <authorList>
            <person name="Tettelin H."/>
            <person name="Masignani V."/>
            <person name="Cieslewicz M.J."/>
            <person name="Donati C."/>
            <person name="Medini D."/>
            <person name="Ward N.L."/>
            <person name="Angiuoli S.V."/>
            <person name="Crabtree J."/>
            <person name="Jones A.L."/>
            <person name="Durkin A.S."/>
            <person name="DeBoy R.T."/>
            <person name="Davidsen T.M."/>
            <person name="Mora M."/>
            <person name="Scarselli M."/>
            <person name="Margarit y Ros I."/>
            <person name="Peterson J.D."/>
            <person name="Hauser C.R."/>
            <person name="Sundaram J.P."/>
            <person name="Nelson W.C."/>
            <person name="Madupu R."/>
            <person name="Brinkac L.M."/>
            <person name="Dodson R.J."/>
            <person name="Rosovitz M.J."/>
            <person name="Sullivan S.A."/>
            <person name="Daugherty S.C."/>
            <person name="Haft D.H."/>
            <person name="Selengut J."/>
            <person name="Gwinn M.L."/>
            <person name="Zhou L."/>
            <person name="Zafar N."/>
            <person name="Khouri H."/>
            <person name="Radune D."/>
            <person name="Dimitrov G."/>
            <person name="Watkins K."/>
            <person name="O'Connor K.J."/>
            <person name="Smith S."/>
            <person name="Utterback T.R."/>
            <person name="White O."/>
            <person name="Rubens C.E."/>
            <person name="Grandi G."/>
            <person name="Madoff L.C."/>
            <person name="Kasper D.L."/>
            <person name="Telford J.L."/>
            <person name="Wessels M.R."/>
            <person name="Rappuoli R."/>
            <person name="Fraser C.M."/>
        </authorList>
    </citation>
    <scope>NUCLEOTIDE SEQUENCE [LARGE SCALE GENOMIC DNA]</scope>
    <source>
        <strain>ATCC 27591 / A909 / CDC SS700</strain>
    </source>
</reference>
<evidence type="ECO:0000255" key="1">
    <source>
        <dbReference type="HAMAP-Rule" id="MF_01197"/>
    </source>
</evidence>
<evidence type="ECO:0000256" key="2">
    <source>
        <dbReference type="SAM" id="MobiDB-lite"/>
    </source>
</evidence>
<gene>
    <name evidence="1" type="primary">sepF</name>
    <name type="ordered locus">SAK_0583</name>
</gene>
<organism>
    <name type="scientific">Streptococcus agalactiae serotype Ia (strain ATCC 27591 / A909 / CDC SS700)</name>
    <dbReference type="NCBI Taxonomy" id="205921"/>
    <lineage>
        <taxon>Bacteria</taxon>
        <taxon>Bacillati</taxon>
        <taxon>Bacillota</taxon>
        <taxon>Bacilli</taxon>
        <taxon>Lactobacillales</taxon>
        <taxon>Streptococcaceae</taxon>
        <taxon>Streptococcus</taxon>
    </lineage>
</organism>
<protein>
    <recommendedName>
        <fullName evidence="1">Cell division protein SepF</fullName>
    </recommendedName>
</protein>
<comment type="function">
    <text evidence="1">Cell division protein that is part of the divisome complex and is recruited early to the Z-ring. Probably stimulates Z-ring formation, perhaps through the cross-linking of FtsZ protofilaments. Its function overlaps with FtsA.</text>
</comment>
<comment type="subunit">
    <text evidence="1">Homodimer. Interacts with FtsZ.</text>
</comment>
<comment type="subcellular location">
    <subcellularLocation>
        <location evidence="1">Cytoplasm</location>
    </subcellularLocation>
    <text evidence="1">Localizes to the division site, in a FtsZ-dependent manner.</text>
</comment>
<comment type="similarity">
    <text evidence="1">Belongs to the SepF family.</text>
</comment>
<name>SEPF_STRA1</name>
<feature type="chain" id="PRO_0000334091" description="Cell division protein SepF">
    <location>
        <begin position="1"/>
        <end position="201"/>
    </location>
</feature>
<feature type="region of interest" description="Disordered" evidence="2">
    <location>
        <begin position="27"/>
        <end position="99"/>
    </location>
</feature>
<feature type="compositionally biased region" description="Basic and acidic residues" evidence="2">
    <location>
        <begin position="27"/>
        <end position="38"/>
    </location>
</feature>
<feature type="compositionally biased region" description="Polar residues" evidence="2">
    <location>
        <begin position="43"/>
        <end position="54"/>
    </location>
</feature>
<feature type="compositionally biased region" description="Basic and acidic residues" evidence="2">
    <location>
        <begin position="72"/>
        <end position="81"/>
    </location>
</feature>
<feature type="compositionally biased region" description="Polar residues" evidence="2">
    <location>
        <begin position="83"/>
        <end position="92"/>
    </location>
</feature>
<sequence length="201" mass="23387">MALKDRFDKIISYFDTDDVSENEVHEVQERTSVQRDSRAATAQEASQRSHMTNSAEEEMIGSRPRTSTYDPNRQERQRVQRDNAYQQATPRVQNKDSVRQQREQVTIALKYPRKYEDAQEIVDLLIVNECVLIDFQYMLDAQARRCLDYIDGASRVLYGSLQKVGSSMFLLTPANVMVDIEEMNIPKTGQETSFDFDMKRR</sequence>